<comment type="function">
    <text evidence="1">RNA chaperone with significant RNA binding, RNA strand exchange and RNA duplexing activities. May regulate ProP activity through an RNA-based, post-transcriptional mechanism.</text>
</comment>
<comment type="subcellular location">
    <subcellularLocation>
        <location evidence="1">Cytoplasm</location>
    </subcellularLocation>
</comment>
<comment type="similarity">
    <text evidence="1">Belongs to the ProQ family.</text>
</comment>
<gene>
    <name evidence="1" type="primary">proQ</name>
    <name type="ordered locus">E2348C_1956</name>
</gene>
<feature type="chain" id="PRO_1000148342" description="RNA chaperone ProQ">
    <location>
        <begin position="1"/>
        <end position="232"/>
    </location>
</feature>
<feature type="region of interest" description="Disordered" evidence="2">
    <location>
        <begin position="105"/>
        <end position="182"/>
    </location>
</feature>
<feature type="compositionally biased region" description="Basic and acidic residues" evidence="2">
    <location>
        <begin position="117"/>
        <end position="136"/>
    </location>
</feature>
<feature type="compositionally biased region" description="Basic residues" evidence="2">
    <location>
        <begin position="137"/>
        <end position="146"/>
    </location>
</feature>
<feature type="compositionally biased region" description="Basic and acidic residues" evidence="2">
    <location>
        <begin position="147"/>
        <end position="177"/>
    </location>
</feature>
<accession>B7USK8</accession>
<keyword id="KW-0143">Chaperone</keyword>
<keyword id="KW-0963">Cytoplasm</keyword>
<keyword id="KW-1185">Reference proteome</keyword>
<keyword id="KW-0694">RNA-binding</keyword>
<protein>
    <recommendedName>
        <fullName evidence="1">RNA chaperone ProQ</fullName>
    </recommendedName>
</protein>
<name>PROQ_ECO27</name>
<evidence type="ECO:0000255" key="1">
    <source>
        <dbReference type="HAMAP-Rule" id="MF_00749"/>
    </source>
</evidence>
<evidence type="ECO:0000256" key="2">
    <source>
        <dbReference type="SAM" id="MobiDB-lite"/>
    </source>
</evidence>
<sequence>MENQPKLNSSKEVIAFLAERFPHCFSAEGEARPLKIGIFQDLVDRVAGEMNLSKTQLRSALRLYTSSWRYLYGVKPGATRVDLDGNPCGELDEQHVEHARKQLEEAKARVQAQRAEQQAKKREAAAAAGEKEDAPRRERKPRPTTPRRKEGAERKPRSQKPVEKAPKTVKAPREEQHTPVSDISALTVGQALKVKAGQNAMDATVLEITKDGVRVQLNSGMSLIVRAEHLVF</sequence>
<proteinExistence type="inferred from homology"/>
<dbReference type="EMBL" id="FM180568">
    <property type="protein sequence ID" value="CAS09504.1"/>
    <property type="molecule type" value="Genomic_DNA"/>
</dbReference>
<dbReference type="RefSeq" id="WP_000431376.1">
    <property type="nucleotide sequence ID" value="NC_011601.1"/>
</dbReference>
<dbReference type="SMR" id="B7USK8"/>
<dbReference type="KEGG" id="ecg:E2348C_1956"/>
<dbReference type="HOGENOM" id="CLU_113254_0_0_6"/>
<dbReference type="Proteomes" id="UP000008205">
    <property type="component" value="Chromosome"/>
</dbReference>
<dbReference type="GO" id="GO:0005829">
    <property type="term" value="C:cytosol"/>
    <property type="evidence" value="ECO:0007669"/>
    <property type="project" value="TreeGrafter"/>
</dbReference>
<dbReference type="GO" id="GO:0033592">
    <property type="term" value="F:RNA strand annealing activity"/>
    <property type="evidence" value="ECO:0007669"/>
    <property type="project" value="UniProtKB-UniRule"/>
</dbReference>
<dbReference type="GO" id="GO:0034057">
    <property type="term" value="F:RNA strand-exchange activity"/>
    <property type="evidence" value="ECO:0007669"/>
    <property type="project" value="UniProtKB-UniRule"/>
</dbReference>
<dbReference type="GO" id="GO:0010608">
    <property type="term" value="P:post-transcriptional regulation of gene expression"/>
    <property type="evidence" value="ECO:0007669"/>
    <property type="project" value="InterPro"/>
</dbReference>
<dbReference type="FunFam" id="1.10.1710.10:FF:000001">
    <property type="entry name" value="RNA chaperone ProQ"/>
    <property type="match status" value="1"/>
</dbReference>
<dbReference type="Gene3D" id="1.10.1710.10">
    <property type="entry name" value="ProQ/FinO domain"/>
    <property type="match status" value="1"/>
</dbReference>
<dbReference type="HAMAP" id="MF_00749">
    <property type="entry name" value="ProQ"/>
    <property type="match status" value="1"/>
</dbReference>
<dbReference type="InterPro" id="IPR023529">
    <property type="entry name" value="ProQ"/>
</dbReference>
<dbReference type="InterPro" id="IPR016103">
    <property type="entry name" value="ProQ/FinO"/>
</dbReference>
<dbReference type="InterPro" id="IPR036442">
    <property type="entry name" value="ProQ/FinO_sf"/>
</dbReference>
<dbReference type="InterPro" id="IPR035236">
    <property type="entry name" value="ProQ_C"/>
</dbReference>
<dbReference type="NCBIfam" id="NF003434">
    <property type="entry name" value="PRK04950.1"/>
    <property type="match status" value="1"/>
</dbReference>
<dbReference type="PANTHER" id="PTHR38106">
    <property type="entry name" value="RNA CHAPERONE PROQ"/>
    <property type="match status" value="1"/>
</dbReference>
<dbReference type="PANTHER" id="PTHR38106:SF1">
    <property type="entry name" value="RNA CHAPERONE PROQ"/>
    <property type="match status" value="1"/>
</dbReference>
<dbReference type="Pfam" id="PF04352">
    <property type="entry name" value="ProQ"/>
    <property type="match status" value="1"/>
</dbReference>
<dbReference type="Pfam" id="PF17516">
    <property type="entry name" value="ProQ_C"/>
    <property type="match status" value="1"/>
</dbReference>
<dbReference type="SMART" id="SM00945">
    <property type="entry name" value="ProQ"/>
    <property type="match status" value="1"/>
</dbReference>
<dbReference type="SUPFAM" id="SSF48657">
    <property type="entry name" value="FinO-like"/>
    <property type="match status" value="1"/>
</dbReference>
<organism>
    <name type="scientific">Escherichia coli O127:H6 (strain E2348/69 / EPEC)</name>
    <dbReference type="NCBI Taxonomy" id="574521"/>
    <lineage>
        <taxon>Bacteria</taxon>
        <taxon>Pseudomonadati</taxon>
        <taxon>Pseudomonadota</taxon>
        <taxon>Gammaproteobacteria</taxon>
        <taxon>Enterobacterales</taxon>
        <taxon>Enterobacteriaceae</taxon>
        <taxon>Escherichia</taxon>
    </lineage>
</organism>
<reference key="1">
    <citation type="journal article" date="2009" name="J. Bacteriol.">
        <title>Complete genome sequence and comparative genome analysis of enteropathogenic Escherichia coli O127:H6 strain E2348/69.</title>
        <authorList>
            <person name="Iguchi A."/>
            <person name="Thomson N.R."/>
            <person name="Ogura Y."/>
            <person name="Saunders D."/>
            <person name="Ooka T."/>
            <person name="Henderson I.R."/>
            <person name="Harris D."/>
            <person name="Asadulghani M."/>
            <person name="Kurokawa K."/>
            <person name="Dean P."/>
            <person name="Kenny B."/>
            <person name="Quail M.A."/>
            <person name="Thurston S."/>
            <person name="Dougan G."/>
            <person name="Hayashi T."/>
            <person name="Parkhill J."/>
            <person name="Frankel G."/>
        </authorList>
    </citation>
    <scope>NUCLEOTIDE SEQUENCE [LARGE SCALE GENOMIC DNA]</scope>
    <source>
        <strain>E2348/69 / EPEC</strain>
    </source>
</reference>